<proteinExistence type="inferred from homology"/>
<dbReference type="EC" id="7.1.1.-" evidence="1"/>
<dbReference type="EMBL" id="CP000509">
    <property type="protein sequence ID" value="ABL80064.1"/>
    <property type="molecule type" value="Genomic_DNA"/>
</dbReference>
<dbReference type="SMR" id="A1SE29"/>
<dbReference type="STRING" id="196162.Noca_0522"/>
<dbReference type="KEGG" id="nca:Noca_0522"/>
<dbReference type="eggNOG" id="COG0852">
    <property type="taxonomic scope" value="Bacteria"/>
</dbReference>
<dbReference type="HOGENOM" id="CLU_042628_4_0_11"/>
<dbReference type="OrthoDB" id="9803286at2"/>
<dbReference type="Proteomes" id="UP000000640">
    <property type="component" value="Chromosome"/>
</dbReference>
<dbReference type="GO" id="GO:0005886">
    <property type="term" value="C:plasma membrane"/>
    <property type="evidence" value="ECO:0007669"/>
    <property type="project" value="UniProtKB-SubCell"/>
</dbReference>
<dbReference type="GO" id="GO:0008137">
    <property type="term" value="F:NADH dehydrogenase (ubiquinone) activity"/>
    <property type="evidence" value="ECO:0007669"/>
    <property type="project" value="InterPro"/>
</dbReference>
<dbReference type="GO" id="GO:0050136">
    <property type="term" value="F:NADH:ubiquinone reductase (non-electrogenic) activity"/>
    <property type="evidence" value="ECO:0007669"/>
    <property type="project" value="UniProtKB-UniRule"/>
</dbReference>
<dbReference type="GO" id="GO:0048038">
    <property type="term" value="F:quinone binding"/>
    <property type="evidence" value="ECO:0007669"/>
    <property type="project" value="UniProtKB-KW"/>
</dbReference>
<dbReference type="Gene3D" id="3.30.460.80">
    <property type="entry name" value="NADH:ubiquinone oxidoreductase, 30kDa subunit"/>
    <property type="match status" value="1"/>
</dbReference>
<dbReference type="HAMAP" id="MF_01357">
    <property type="entry name" value="NDH1_NuoC"/>
    <property type="match status" value="1"/>
</dbReference>
<dbReference type="InterPro" id="IPR010218">
    <property type="entry name" value="NADH_DH_suC"/>
</dbReference>
<dbReference type="InterPro" id="IPR037232">
    <property type="entry name" value="NADH_quin_OxRdtase_su_C/D-like"/>
</dbReference>
<dbReference type="InterPro" id="IPR001268">
    <property type="entry name" value="NADH_UbQ_OxRdtase_30kDa_su"/>
</dbReference>
<dbReference type="NCBIfam" id="TIGR01961">
    <property type="entry name" value="NuoC_fam"/>
    <property type="match status" value="1"/>
</dbReference>
<dbReference type="NCBIfam" id="NF005856">
    <property type="entry name" value="PRK07785.1"/>
    <property type="match status" value="1"/>
</dbReference>
<dbReference type="PANTHER" id="PTHR10884:SF14">
    <property type="entry name" value="NADH DEHYDROGENASE [UBIQUINONE] IRON-SULFUR PROTEIN 3, MITOCHONDRIAL"/>
    <property type="match status" value="1"/>
</dbReference>
<dbReference type="PANTHER" id="PTHR10884">
    <property type="entry name" value="NADH DEHYDROGENASE UBIQUINONE IRON-SULFUR PROTEIN 3"/>
    <property type="match status" value="1"/>
</dbReference>
<dbReference type="Pfam" id="PF00329">
    <property type="entry name" value="Complex1_30kDa"/>
    <property type="match status" value="1"/>
</dbReference>
<dbReference type="SUPFAM" id="SSF143243">
    <property type="entry name" value="Nqo5-like"/>
    <property type="match status" value="1"/>
</dbReference>
<gene>
    <name evidence="1" type="primary">nuoC</name>
    <name type="ordered locus">Noca_0522</name>
</gene>
<accession>A1SE29</accession>
<feature type="chain" id="PRO_0000358154" description="NADH-quinone oxidoreductase subunit C">
    <location>
        <begin position="1"/>
        <end position="250"/>
    </location>
</feature>
<feature type="region of interest" description="Disordered" evidence="2">
    <location>
        <begin position="1"/>
        <end position="33"/>
    </location>
</feature>
<feature type="region of interest" description="Disordered" evidence="2">
    <location>
        <begin position="228"/>
        <end position="250"/>
    </location>
</feature>
<keyword id="KW-1003">Cell membrane</keyword>
<keyword id="KW-0472">Membrane</keyword>
<keyword id="KW-0520">NAD</keyword>
<keyword id="KW-0874">Quinone</keyword>
<keyword id="KW-1185">Reference proteome</keyword>
<keyword id="KW-1278">Translocase</keyword>
<keyword id="KW-0813">Transport</keyword>
<evidence type="ECO:0000255" key="1">
    <source>
        <dbReference type="HAMAP-Rule" id="MF_01357"/>
    </source>
</evidence>
<evidence type="ECO:0000256" key="2">
    <source>
        <dbReference type="SAM" id="MobiDB-lite"/>
    </source>
</evidence>
<reference key="1">
    <citation type="submission" date="2006-12" db="EMBL/GenBank/DDBJ databases">
        <title>Complete sequence of chromosome 1 of Nocardioides sp. JS614.</title>
        <authorList>
            <person name="Copeland A."/>
            <person name="Lucas S."/>
            <person name="Lapidus A."/>
            <person name="Barry K."/>
            <person name="Detter J.C."/>
            <person name="Glavina del Rio T."/>
            <person name="Hammon N."/>
            <person name="Israni S."/>
            <person name="Dalin E."/>
            <person name="Tice H."/>
            <person name="Pitluck S."/>
            <person name="Thompson L.S."/>
            <person name="Brettin T."/>
            <person name="Bruce D."/>
            <person name="Han C."/>
            <person name="Tapia R."/>
            <person name="Schmutz J."/>
            <person name="Larimer F."/>
            <person name="Land M."/>
            <person name="Hauser L."/>
            <person name="Kyrpides N."/>
            <person name="Kim E."/>
            <person name="Mattes T."/>
            <person name="Gossett J."/>
            <person name="Richardson P."/>
        </authorList>
    </citation>
    <scope>NUCLEOTIDE SEQUENCE [LARGE SCALE GENOMIC DNA]</scope>
    <source>
        <strain>ATCC BAA-499 / JS614</strain>
    </source>
</reference>
<organism>
    <name type="scientific">Nocardioides sp. (strain ATCC BAA-499 / JS614)</name>
    <dbReference type="NCBI Taxonomy" id="196162"/>
    <lineage>
        <taxon>Bacteria</taxon>
        <taxon>Bacillati</taxon>
        <taxon>Actinomycetota</taxon>
        <taxon>Actinomycetes</taxon>
        <taxon>Propionibacteriales</taxon>
        <taxon>Nocardioidaceae</taxon>
        <taxon>Nocardioides</taxon>
    </lineage>
</organism>
<comment type="function">
    <text evidence="1">NDH-1 shuttles electrons from NADH, via FMN and iron-sulfur (Fe-S) centers, to quinones in the respiratory chain. The immediate electron acceptor for the enzyme in this species is believed to be a menaquinone. Couples the redox reaction to proton translocation (for every two electrons transferred, four hydrogen ions are translocated across the cytoplasmic membrane), and thus conserves the redox energy in a proton gradient.</text>
</comment>
<comment type="catalytic activity">
    <reaction evidence="1">
        <text>a quinone + NADH + 5 H(+)(in) = a quinol + NAD(+) + 4 H(+)(out)</text>
        <dbReference type="Rhea" id="RHEA:57888"/>
        <dbReference type="ChEBI" id="CHEBI:15378"/>
        <dbReference type="ChEBI" id="CHEBI:24646"/>
        <dbReference type="ChEBI" id="CHEBI:57540"/>
        <dbReference type="ChEBI" id="CHEBI:57945"/>
        <dbReference type="ChEBI" id="CHEBI:132124"/>
    </reaction>
</comment>
<comment type="subunit">
    <text evidence="1">NDH-1 is composed of 14 different subunits. Subunits NuoB, C, D, E, F, and G constitute the peripheral sector of the complex.</text>
</comment>
<comment type="subcellular location">
    <subcellularLocation>
        <location evidence="1">Cell membrane</location>
        <topology evidence="1">Peripheral membrane protein</topology>
        <orientation evidence="1">Cytoplasmic side</orientation>
    </subcellularLocation>
</comment>
<comment type="similarity">
    <text evidence="1">Belongs to the complex I 30 kDa subunit family.</text>
</comment>
<sequence length="250" mass="27573">MSDDSSDVKPGPKGPEQPAVEQSPENVPAPTGEVHQVGARHGMFGVRGTGDTSGYGGLNQAIVLPGDAQRPYGGWFDEVADGLAAATREAGLEIAAPRVVIHRGEITFHLRREDLLPVAQVLRDDERLRFEFCAGVSGVHYPDETGRELHAVYHLLSMTHNRRIRLEVAVPDADPHIPSIVPVYPTNDWHERETYDMFGIIFDGHPALTRILMPDDWPGHPQRKDYPLGGVPVEYKGGTVPPPDQRRSYN</sequence>
<protein>
    <recommendedName>
        <fullName evidence="1">NADH-quinone oxidoreductase subunit C</fullName>
        <ecNumber evidence="1">7.1.1.-</ecNumber>
    </recommendedName>
    <alternativeName>
        <fullName evidence="1">NADH dehydrogenase I subunit C</fullName>
    </alternativeName>
    <alternativeName>
        <fullName evidence="1">NDH-1 subunit C</fullName>
    </alternativeName>
</protein>
<name>NUOC_NOCSJ</name>